<comment type="function">
    <text evidence="1 2 3 6">Catalyzes the activation of long-chain fatty acids as acyl-adenylates (acyl-AMP), which are then transferred to the multifunctional polyketide synthase PpsA for further chain extension (PubMed:15042094, PubMed:15749014, PubMed:20553505). Catalyzes the adenylation of the long-chain fatty acids eicosanoate (C20) or docosanoate (C22), and potentially the very-long-chain fatty acid lignocerate (C24) (PubMed:15749014, PubMed:20553505). Involved in the biosynthesis of phthiocerol dimycocerosate (DIM A) and phthiodiolone dimycocerosate (DIM B) (PubMed:11279114, PubMed:20553505).</text>
</comment>
<comment type="catalytic activity">
    <reaction evidence="2 3 11">
        <text>holo-[(phenol)carboxyphthiodiolenone synthase] + a long-chain fatty acid + ATP = a long-chain fatty acyl-[(phenol)carboxyphthiodiolenone synthase] + AMP + diphosphate</text>
        <dbReference type="Rhea" id="RHEA:64660"/>
        <dbReference type="Rhea" id="RHEA-COMP:14271"/>
        <dbReference type="Rhea" id="RHEA-COMP:16648"/>
        <dbReference type="ChEBI" id="CHEBI:30616"/>
        <dbReference type="ChEBI" id="CHEBI:33019"/>
        <dbReference type="ChEBI" id="CHEBI:57560"/>
        <dbReference type="ChEBI" id="CHEBI:64479"/>
        <dbReference type="ChEBI" id="CHEBI:133243"/>
        <dbReference type="ChEBI" id="CHEBI:456215"/>
        <dbReference type="EC" id="6.2.1.59"/>
    </reaction>
</comment>
<comment type="catalytic activity">
    <reaction evidence="10 11">
        <text>eicosanoate + holo-[(phenol)carboxyphthiodiolenone synthase] + ATP = icosanoyl-[(phenol)carboxyphthiodiolenone synthase] + AMP + diphosphate</text>
        <dbReference type="Rhea" id="RHEA:59156"/>
        <dbReference type="Rhea" id="RHEA-COMP:14271"/>
        <dbReference type="Rhea" id="RHEA-COMP:14985"/>
        <dbReference type="ChEBI" id="CHEBI:30616"/>
        <dbReference type="ChEBI" id="CHEBI:32360"/>
        <dbReference type="ChEBI" id="CHEBI:33019"/>
        <dbReference type="ChEBI" id="CHEBI:64479"/>
        <dbReference type="ChEBI" id="CHEBI:87848"/>
        <dbReference type="ChEBI" id="CHEBI:456215"/>
        <dbReference type="EC" id="6.2.1.59"/>
    </reaction>
</comment>
<comment type="catalytic activity">
    <reaction evidence="10 11">
        <text>holo-[(phenol)carboxyphthiodiolenone synthase] + docosanoate + ATP = docosanoyl-[(phenol)carboxyphthiodiolenone synthase] + AMP + diphosphate</text>
        <dbReference type="Rhea" id="RHEA:59160"/>
        <dbReference type="Rhea" id="RHEA-COMP:14271"/>
        <dbReference type="Rhea" id="RHEA-COMP:14987"/>
        <dbReference type="ChEBI" id="CHEBI:23858"/>
        <dbReference type="ChEBI" id="CHEBI:30616"/>
        <dbReference type="ChEBI" id="CHEBI:33019"/>
        <dbReference type="ChEBI" id="CHEBI:64479"/>
        <dbReference type="ChEBI" id="CHEBI:142238"/>
        <dbReference type="ChEBI" id="CHEBI:456215"/>
        <dbReference type="EC" id="6.2.1.59"/>
    </reaction>
</comment>
<comment type="catalytic activity">
    <reaction evidence="5">
        <text>dodecanoate + ATP + H(+) = dodecanoyl-AMP + diphosphate</text>
        <dbReference type="Rhea" id="RHEA:43712"/>
        <dbReference type="ChEBI" id="CHEBI:15378"/>
        <dbReference type="ChEBI" id="CHEBI:18262"/>
        <dbReference type="ChEBI" id="CHEBI:30616"/>
        <dbReference type="ChEBI" id="CHEBI:33019"/>
        <dbReference type="ChEBI" id="CHEBI:83623"/>
    </reaction>
    <physiologicalReaction direction="left-to-right" evidence="5">
        <dbReference type="Rhea" id="RHEA:43713"/>
    </physiologicalReaction>
</comment>
<comment type="catalytic activity">
    <reaction evidence="5">
        <text>hexadecanoate + ATP + H(+) = hexadecanoyl-AMP + diphosphate</text>
        <dbReference type="Rhea" id="RHEA:43708"/>
        <dbReference type="ChEBI" id="CHEBI:7896"/>
        <dbReference type="ChEBI" id="CHEBI:15378"/>
        <dbReference type="ChEBI" id="CHEBI:30616"/>
        <dbReference type="ChEBI" id="CHEBI:33019"/>
        <dbReference type="ChEBI" id="CHEBI:83627"/>
    </reaction>
    <physiologicalReaction direction="left-to-right" evidence="5">
        <dbReference type="Rhea" id="RHEA:43709"/>
    </physiologicalReaction>
</comment>
<comment type="pathway">
    <text evidence="1 6">Lipid metabolism; fatty acid biosynthesis.</text>
</comment>
<comment type="disruption phenotype">
    <text evidence="1 4">Disruption of the gene abolishes the production of phthiocerol dimycocerosate (DIM) on the cell envelope (PubMed:11279114). Mutant is attenuated in BALB/c mice. Mutant induces less pneumonia and larger delayed-type hypersensitivity (DTH) reactions. It also induces lower but progressive production of IFN-gamma, IL-4 and TNF-alpha (PubMed:15958066).</text>
</comment>
<comment type="biotechnology">
    <text evidence="4 7">Vaccination with the fadD26 mutant protects against progressive tuberculosis more efficiently than does Bacille Calmette-Guerin (BCG). It suggests that inactivation of DIM synthesis can increase the immunogenicity of live vaccines, and increase their ability to protect against tuberculosis, indicating that fadD26 mutant could be a potential vaccine candidate (PubMed:15958066). A double unmarked sigE fadD26 mutant is more attenuated and more protective than BCG and is also a promising new prime TB vaccine candidate (PubMed:31591165).</text>
</comment>
<comment type="similarity">
    <text evidence="9">Belongs to the ATP-dependent AMP-binding enzyme family.</text>
</comment>
<feature type="chain" id="PRO_0000193138" description="Long-chain-fatty-acid--AMP ligase FadD26">
    <location>
        <begin position="1"/>
        <end position="583"/>
    </location>
</feature>
<protein>
    <recommendedName>
        <fullName evidence="9">Long-chain-fatty-acid--AMP ligase FadD26</fullName>
        <shortName>FAAL</shortName>
        <ecNumber evidence="2 3 11">6.2.1.59</ecNumber>
    </recommendedName>
    <alternativeName>
        <fullName>Acyl-AMP synthetase</fullName>
    </alternativeName>
    <alternativeName>
        <fullName evidence="8">FAAL26</fullName>
    </alternativeName>
</protein>
<reference key="1">
    <citation type="journal article" date="1998" name="Nature">
        <title>Deciphering the biology of Mycobacterium tuberculosis from the complete genome sequence.</title>
        <authorList>
            <person name="Cole S.T."/>
            <person name="Brosch R."/>
            <person name="Parkhill J."/>
            <person name="Garnier T."/>
            <person name="Churcher C.M."/>
            <person name="Harris D.E."/>
            <person name="Gordon S.V."/>
            <person name="Eiglmeier K."/>
            <person name="Gas S."/>
            <person name="Barry C.E. III"/>
            <person name="Tekaia F."/>
            <person name="Badcock K."/>
            <person name="Basham D."/>
            <person name="Brown D."/>
            <person name="Chillingworth T."/>
            <person name="Connor R."/>
            <person name="Davies R.M."/>
            <person name="Devlin K."/>
            <person name="Feltwell T."/>
            <person name="Gentles S."/>
            <person name="Hamlin N."/>
            <person name="Holroyd S."/>
            <person name="Hornsby T."/>
            <person name="Jagels K."/>
            <person name="Krogh A."/>
            <person name="McLean J."/>
            <person name="Moule S."/>
            <person name="Murphy L.D."/>
            <person name="Oliver S."/>
            <person name="Osborne J."/>
            <person name="Quail M.A."/>
            <person name="Rajandream M.A."/>
            <person name="Rogers J."/>
            <person name="Rutter S."/>
            <person name="Seeger K."/>
            <person name="Skelton S."/>
            <person name="Squares S."/>
            <person name="Squares R."/>
            <person name="Sulston J.E."/>
            <person name="Taylor K."/>
            <person name="Whitehead S."/>
            <person name="Barrell B.G."/>
        </authorList>
    </citation>
    <scope>NUCLEOTIDE SEQUENCE [LARGE SCALE GENOMIC DNA]</scope>
    <source>
        <strain>ATCC 25618 / H37Rv</strain>
    </source>
</reference>
<reference key="2">
    <citation type="journal article" date="2001" name="J. Biol. Chem.">
        <title>Analysis of the phthiocerol dimycocerosate locus of Mycobacterium tuberculosis. Evidence that this lipid is involved in the cell wall permeability barrier.</title>
        <authorList>
            <person name="Camacho L.R."/>
            <person name="Constant P."/>
            <person name="Raynaud C."/>
            <person name="Laneelle M.A."/>
            <person name="Triccas J.A."/>
            <person name="Gicquel B."/>
            <person name="Daffe M."/>
            <person name="Guilhot C."/>
        </authorList>
    </citation>
    <scope>FUNCTION IN THE BIOSYNTHESIS OF PHTHIOCEROL</scope>
    <scope>PATHWAY</scope>
    <scope>DISRUPTION PHENOTYPE</scope>
    <source>
        <strain>ATCC 25618 / H37Rv</strain>
    </source>
</reference>
<reference key="3">
    <citation type="journal article" date="2004" name="Nature">
        <title>Enzymic activation and transfer of fatty acids as acyl-adenylates in mycobacteria.</title>
        <authorList>
            <person name="Trivedi O.A."/>
            <person name="Arora P."/>
            <person name="Sridharan V."/>
            <person name="Tickoo R."/>
            <person name="Mohanty D."/>
            <person name="Gokhale R.S."/>
        </authorList>
    </citation>
    <scope>FUNCTION AS AN ACYL-AMP SYNTHETASE</scope>
    <scope>CATALYTIC ACTIVITY</scope>
    <source>
        <strain>ATCC 25618 / H37Rv</strain>
    </source>
</reference>
<reference key="4">
    <citation type="journal article" date="2005" name="Mol. Cell">
        <title>Dissecting the mechanism and assembly of a complex virulence mycobacterial lipid.</title>
        <authorList>
            <person name="Trivedi O.A."/>
            <person name="Arora P."/>
            <person name="Vats A."/>
            <person name="Ansari M.Z."/>
            <person name="Tickoo R."/>
            <person name="Sridharan V."/>
            <person name="Mohanty D."/>
            <person name="Gokhale R.S."/>
        </authorList>
    </citation>
    <scope>FUNCTION</scope>
    <scope>CATALYTIC ACTIVITY</scope>
</reference>
<reference key="5">
    <citation type="journal article" date="2005" name="Clin. Exp. Immunol.">
        <title>Immunogenicity and protective efficacy of the Mycobacterium tuberculosis fadD26 mutant.</title>
        <authorList>
            <person name="Infante E."/>
            <person name="Aguilar L.D."/>
            <person name="Gicquel B."/>
            <person name="Pando R.H."/>
        </authorList>
    </citation>
    <scope>DISRUPTION PHENOTYPE</scope>
    <scope>BIOTECHNOLOGY</scope>
    <source>
        <strain>Mt103</strain>
    </source>
</reference>
<reference key="6">
    <citation type="journal article" date="2009" name="Nat. Chem. Biol.">
        <title>Mechanistic and functional insights into fatty acid activation in Mycobacterium tuberculosis.</title>
        <authorList>
            <person name="Arora P."/>
            <person name="Goyal A."/>
            <person name="Natarajan V.T."/>
            <person name="Rajakumara E."/>
            <person name="Verma P."/>
            <person name="Gupta R."/>
            <person name="Yousuf M."/>
            <person name="Trivedi O.A."/>
            <person name="Mohanty D."/>
            <person name="Tyagi A."/>
            <person name="Sankaranarayanan R."/>
            <person name="Gokhale R.S."/>
        </authorList>
    </citation>
    <scope>CATALYTIC ACTIVITY</scope>
</reference>
<reference key="7">
    <citation type="journal article" date="2010" name="FEBS J.">
        <title>Delineation of the roles of FadD22, FadD26 and FadD29 in the biosynthesis of phthiocerol dimycocerosates and related compounds in Mycobacterium tuberculosis.</title>
        <authorList>
            <person name="Simeone R."/>
            <person name="Leger M."/>
            <person name="Constant P."/>
            <person name="Malaga W."/>
            <person name="Marrakchi H."/>
            <person name="Daffe M."/>
            <person name="Guilhot C."/>
            <person name="Chalut C."/>
        </authorList>
    </citation>
    <scope>FUNCTION</scope>
    <scope>CATALYTIC ACTIVITY</scope>
    <scope>PATHWAY</scope>
</reference>
<reference key="8">
    <citation type="journal article" date="2011" name="Mol. Cell. Proteomics">
        <title>Proteogenomic analysis of Mycobacterium tuberculosis by high resolution mass spectrometry.</title>
        <authorList>
            <person name="Kelkar D.S."/>
            <person name="Kumar D."/>
            <person name="Kumar P."/>
            <person name="Balakrishnan L."/>
            <person name="Muthusamy B."/>
            <person name="Yadav A.K."/>
            <person name="Shrivastava P."/>
            <person name="Marimuthu A."/>
            <person name="Anand S."/>
            <person name="Sundaram H."/>
            <person name="Kingsbury R."/>
            <person name="Harsha H.C."/>
            <person name="Nair B."/>
            <person name="Prasad T.S."/>
            <person name="Chauhan D.S."/>
            <person name="Katoch K."/>
            <person name="Katoch V.M."/>
            <person name="Kumar P."/>
            <person name="Chaerkady R."/>
            <person name="Ramachandran S."/>
            <person name="Dash D."/>
            <person name="Pandey A."/>
        </authorList>
    </citation>
    <scope>IDENTIFICATION BY MASS SPECTROMETRY [LARGE SCALE ANALYSIS]</scope>
    <source>
        <strain>ATCC 25618 / H37Rv</strain>
    </source>
</reference>
<reference key="9">
    <citation type="journal article" date="2019" name="Infect. Immun.">
        <title>Construction and characterization of the Mycobacterium tuberculosis sigE fadD26 unmarked double mutant as a vaccine candidate.</title>
        <authorList>
            <person name="Hernandez-Pando R."/>
            <person name="Shin S.J."/>
            <person name="Clark S."/>
            <person name="Casonato S."/>
            <person name="Becerril-Zambrano M."/>
            <person name="Kim H."/>
            <person name="Boldrin F."/>
            <person name="Mata-Espinoza D."/>
            <person name="Provvedi R."/>
            <person name="Arbues A."/>
            <person name="Marquina-Castillo B."/>
            <person name="Cioetto Mazzabo L."/>
            <person name="Barrios-Payan J."/>
            <person name="Martin C."/>
            <person name="Cho S.N."/>
            <person name="Williams A."/>
            <person name="Manganelli R."/>
        </authorList>
    </citation>
    <scope>BIOTECHNOLOGY</scope>
</reference>
<name>FAA26_MYCTU</name>
<accession>P9WQ43</accession>
<accession>L0TDT5</accession>
<accession>Q10976</accession>
<keyword id="KW-0067">ATP-binding</keyword>
<keyword id="KW-0276">Fatty acid metabolism</keyword>
<keyword id="KW-0436">Ligase</keyword>
<keyword id="KW-0443">Lipid metabolism</keyword>
<keyword id="KW-0547">Nucleotide-binding</keyword>
<keyword id="KW-1185">Reference proteome</keyword>
<sequence length="583" mass="63044">MPVTDRSVPSLLQERADQQPDSTAYTYIDYGSDPKGFADSLTWSQVYSRACIIAEELKLCGLPGDRVAVLAPQGLEYVLAFLGALQAGFIAVPLSTPQYGIHDDRVSAVLQDSKPVAILTTSSVVGDVTKYAASHDGQPAPVVVEVDLLDLDSPRQMPAFSRQHTGAAYLQYTSGSTRTPAGVIVSHTNVIANVTQSMYGYFGDPAKIPTGTVVSWLPLYHDMGLILGICAPLVARRRAMLMSPMSFLRRPARWMQLLATSGRCFSAAPNFAFELAVRRTSDQDMAGLDLRDVVGIVSGSERIHVATVRRFIERFAPYNLSPTAIRPSYGLAEATLYVAAPEAGAAPKTVRFDYEQLTAGQARPCGTDGSVGTELISYGSPDPSSVRIVNPETMVENPPGVVGEIWVHGDHVTMGYWQKPKQTAQVFDAKLVDPAPAAPEGPWLRTGDLGVISDGELFIMGRIKDLLIVDGRNHYPDDIEATIQEITGGRAAAIAVPDDITEQLVAIIEFKRRGSTAEEVMLKLRSVKREVTSAISKSHSLRVADLVLVSPGSIPITTSGKIRRSACVERYRSDGFKRLDVAV</sequence>
<organism>
    <name type="scientific">Mycobacterium tuberculosis (strain ATCC 25618 / H37Rv)</name>
    <dbReference type="NCBI Taxonomy" id="83332"/>
    <lineage>
        <taxon>Bacteria</taxon>
        <taxon>Bacillati</taxon>
        <taxon>Actinomycetota</taxon>
        <taxon>Actinomycetes</taxon>
        <taxon>Mycobacteriales</taxon>
        <taxon>Mycobacteriaceae</taxon>
        <taxon>Mycobacterium</taxon>
        <taxon>Mycobacterium tuberculosis complex</taxon>
    </lineage>
</organism>
<evidence type="ECO:0000269" key="1">
    <source>
    </source>
</evidence>
<evidence type="ECO:0000269" key="2">
    <source>
    </source>
</evidence>
<evidence type="ECO:0000269" key="3">
    <source>
    </source>
</evidence>
<evidence type="ECO:0000269" key="4">
    <source>
    </source>
</evidence>
<evidence type="ECO:0000269" key="5">
    <source>
    </source>
</evidence>
<evidence type="ECO:0000269" key="6">
    <source>
    </source>
</evidence>
<evidence type="ECO:0000269" key="7">
    <source>
    </source>
</evidence>
<evidence type="ECO:0000303" key="8">
    <source>
    </source>
</evidence>
<evidence type="ECO:0000305" key="9"/>
<evidence type="ECO:0000305" key="10">
    <source>
    </source>
</evidence>
<evidence type="ECO:0000305" key="11">
    <source>
    </source>
</evidence>
<dbReference type="EC" id="6.2.1.59" evidence="2 3 11"/>
<dbReference type="EMBL" id="AL123456">
    <property type="protein sequence ID" value="CCP45733.1"/>
    <property type="molecule type" value="Genomic_DNA"/>
</dbReference>
<dbReference type="PIR" id="B70749">
    <property type="entry name" value="B70749"/>
</dbReference>
<dbReference type="RefSeq" id="NP_217446.2">
    <property type="nucleotide sequence ID" value="NC_000962.3"/>
</dbReference>
<dbReference type="RefSeq" id="WP_003900597.1">
    <property type="nucleotide sequence ID" value="NZ_NVQJ01000006.1"/>
</dbReference>
<dbReference type="SMR" id="P9WQ43"/>
<dbReference type="FunCoup" id="P9WQ43">
    <property type="interactions" value="9"/>
</dbReference>
<dbReference type="STRING" id="83332.Rv2930"/>
<dbReference type="SwissLipids" id="SLP:000000985"/>
<dbReference type="PaxDb" id="83332-Rv2930"/>
<dbReference type="DNASU" id="887603"/>
<dbReference type="GeneID" id="887603"/>
<dbReference type="KEGG" id="mtu:Rv2930"/>
<dbReference type="KEGG" id="mtv:RVBD_2930"/>
<dbReference type="TubercuList" id="Rv2930"/>
<dbReference type="eggNOG" id="COG0318">
    <property type="taxonomic scope" value="Bacteria"/>
</dbReference>
<dbReference type="InParanoid" id="P9WQ43"/>
<dbReference type="OrthoDB" id="3671040at2"/>
<dbReference type="PhylomeDB" id="P9WQ43"/>
<dbReference type="Reactome" id="R-MTU-9635470">
    <property type="pathway name" value="Dimycocersyl phthiocerol biosynthesis"/>
</dbReference>
<dbReference type="UniPathway" id="UPA00094"/>
<dbReference type="Proteomes" id="UP000001584">
    <property type="component" value="Chromosome"/>
</dbReference>
<dbReference type="GO" id="GO:0005829">
    <property type="term" value="C:cytosol"/>
    <property type="evidence" value="ECO:0000304"/>
    <property type="project" value="Reactome"/>
</dbReference>
<dbReference type="GO" id="GO:0005886">
    <property type="term" value="C:plasma membrane"/>
    <property type="evidence" value="ECO:0007005"/>
    <property type="project" value="MTBBASE"/>
</dbReference>
<dbReference type="GO" id="GO:0016878">
    <property type="term" value="F:acid-thiol ligase activity"/>
    <property type="evidence" value="ECO:0000314"/>
    <property type="project" value="MTBBASE"/>
</dbReference>
<dbReference type="GO" id="GO:0070566">
    <property type="term" value="F:adenylyltransferase activity"/>
    <property type="evidence" value="ECO:0000314"/>
    <property type="project" value="MTBBASE"/>
</dbReference>
<dbReference type="GO" id="GO:0005524">
    <property type="term" value="F:ATP binding"/>
    <property type="evidence" value="ECO:0007669"/>
    <property type="project" value="UniProtKB-KW"/>
</dbReference>
<dbReference type="GO" id="GO:0016874">
    <property type="term" value="F:ligase activity"/>
    <property type="evidence" value="ECO:0000315"/>
    <property type="project" value="UniProtKB"/>
</dbReference>
<dbReference type="GO" id="GO:0071766">
    <property type="term" value="P:Actinobacterium-type cell wall biogenesis"/>
    <property type="evidence" value="ECO:0000314"/>
    <property type="project" value="MTBBASE"/>
</dbReference>
<dbReference type="GO" id="GO:0071770">
    <property type="term" value="P:DIM/DIP cell wall layer assembly"/>
    <property type="evidence" value="ECO:0000314"/>
    <property type="project" value="MTBBASE"/>
</dbReference>
<dbReference type="GO" id="GO:0006633">
    <property type="term" value="P:fatty acid biosynthetic process"/>
    <property type="evidence" value="ECO:0000314"/>
    <property type="project" value="MTBBASE"/>
</dbReference>
<dbReference type="GO" id="GO:0008610">
    <property type="term" value="P:lipid biosynthetic process"/>
    <property type="evidence" value="ECO:0000315"/>
    <property type="project" value="UniProtKB"/>
</dbReference>
<dbReference type="GO" id="GO:0097040">
    <property type="term" value="P:phthiocerol biosynthetic process"/>
    <property type="evidence" value="ECO:0000314"/>
    <property type="project" value="MTBBASE"/>
</dbReference>
<dbReference type="CDD" id="cd05931">
    <property type="entry name" value="FAAL"/>
    <property type="match status" value="1"/>
</dbReference>
<dbReference type="FunFam" id="3.30.300.30:FF:000016">
    <property type="entry name" value="Fatty-acid-CoA ligase FadD26"/>
    <property type="match status" value="1"/>
</dbReference>
<dbReference type="FunFam" id="3.40.50.12780:FF:000013">
    <property type="entry name" value="Long-chain-fatty-acid--AMP ligase FadD32"/>
    <property type="match status" value="1"/>
</dbReference>
<dbReference type="Gene3D" id="3.30.300.30">
    <property type="match status" value="1"/>
</dbReference>
<dbReference type="Gene3D" id="3.40.50.12780">
    <property type="entry name" value="N-terminal domain of ligase-like"/>
    <property type="match status" value="1"/>
</dbReference>
<dbReference type="InterPro" id="IPR025110">
    <property type="entry name" value="AMP-bd_C"/>
</dbReference>
<dbReference type="InterPro" id="IPR045851">
    <property type="entry name" value="AMP-bd_C_sf"/>
</dbReference>
<dbReference type="InterPro" id="IPR000873">
    <property type="entry name" value="AMP-dep_synth/lig_dom"/>
</dbReference>
<dbReference type="InterPro" id="IPR042099">
    <property type="entry name" value="ANL_N_sf"/>
</dbReference>
<dbReference type="InterPro" id="IPR040097">
    <property type="entry name" value="FAAL/FAAC"/>
</dbReference>
<dbReference type="NCBIfam" id="NF004509">
    <property type="entry name" value="PRK05850.1"/>
    <property type="match status" value="1"/>
</dbReference>
<dbReference type="PANTHER" id="PTHR22754:SF32">
    <property type="entry name" value="DISCO-INTERACTING PROTEIN 2"/>
    <property type="match status" value="1"/>
</dbReference>
<dbReference type="PANTHER" id="PTHR22754">
    <property type="entry name" value="DISCO-INTERACTING PROTEIN 2 DIP2 -RELATED"/>
    <property type="match status" value="1"/>
</dbReference>
<dbReference type="Pfam" id="PF00501">
    <property type="entry name" value="AMP-binding"/>
    <property type="match status" value="1"/>
</dbReference>
<dbReference type="Pfam" id="PF23024">
    <property type="entry name" value="AMP-dom_DIP2-like"/>
    <property type="match status" value="1"/>
</dbReference>
<dbReference type="SUPFAM" id="SSF56801">
    <property type="entry name" value="Acetyl-CoA synthetase-like"/>
    <property type="match status" value="1"/>
</dbReference>
<proteinExistence type="evidence at protein level"/>
<gene>
    <name type="primary">fadD26</name>
    <name type="ordered locus">Rv2930</name>
    <name type="ORF">MTCY338.19</name>
</gene>